<proteinExistence type="inferred from homology"/>
<accession>Q65RB0</accession>
<name>HIS1_MANSM</name>
<sequence>MSTNKRLRIAMQKKGRLSDESQELLKQCGVKINLQGQKLIAYAENLPIDILRVRDDDIPGLVFDGVVDLGIIGENVLEEEELTRTAAGDKVEYKMLRRLEFGGCRLSLAVDSDVEFDGPESLSDCRIATSYPQLLKRYMAEQGVPFKSILLNGSVEVAPRAGLADAICDLVSSGATLEANGLKEVEVIYRSKACLIQRKEPLSEEKQALVDKILTRIQGVQQADESKYIMLHAPKDKLEEITALLPGVENPTILPLAHDDTKVAVHVVSQENLFWETMEQLKEKGASSVLVLPIEKMLA</sequence>
<reference key="1">
    <citation type="journal article" date="2004" name="Nat. Biotechnol.">
        <title>The genome sequence of the capnophilic rumen bacterium Mannheimia succiniciproducens.</title>
        <authorList>
            <person name="Hong S.H."/>
            <person name="Kim J.S."/>
            <person name="Lee S.Y."/>
            <person name="In Y.H."/>
            <person name="Choi S.S."/>
            <person name="Rih J.-K."/>
            <person name="Kim C.H."/>
            <person name="Jeong H."/>
            <person name="Hur C.G."/>
            <person name="Kim J.J."/>
        </authorList>
    </citation>
    <scope>NUCLEOTIDE SEQUENCE [LARGE SCALE GENOMIC DNA]</scope>
    <source>
        <strain>KCTC 0769BP / MBEL55E</strain>
    </source>
</reference>
<protein>
    <recommendedName>
        <fullName evidence="1">ATP phosphoribosyltransferase</fullName>
        <shortName evidence="1">ATP-PRT</shortName>
        <shortName evidence="1">ATP-PRTase</shortName>
        <ecNumber evidence="1">2.4.2.17</ecNumber>
    </recommendedName>
</protein>
<organism>
    <name type="scientific">Mannheimia succiniciproducens (strain KCTC 0769BP / MBEL55E)</name>
    <dbReference type="NCBI Taxonomy" id="221988"/>
    <lineage>
        <taxon>Bacteria</taxon>
        <taxon>Pseudomonadati</taxon>
        <taxon>Pseudomonadota</taxon>
        <taxon>Gammaproteobacteria</taxon>
        <taxon>Pasteurellales</taxon>
        <taxon>Pasteurellaceae</taxon>
        <taxon>Basfia</taxon>
    </lineage>
</organism>
<gene>
    <name evidence="1" type="primary">hisG</name>
    <name type="ordered locus">MS1893</name>
</gene>
<keyword id="KW-0028">Amino-acid biosynthesis</keyword>
<keyword id="KW-0067">ATP-binding</keyword>
<keyword id="KW-0963">Cytoplasm</keyword>
<keyword id="KW-0328">Glycosyltransferase</keyword>
<keyword id="KW-0368">Histidine biosynthesis</keyword>
<keyword id="KW-0460">Magnesium</keyword>
<keyword id="KW-0479">Metal-binding</keyword>
<keyword id="KW-0547">Nucleotide-binding</keyword>
<keyword id="KW-0808">Transferase</keyword>
<comment type="function">
    <text evidence="1">Catalyzes the condensation of ATP and 5-phosphoribose 1-diphosphate to form N'-(5'-phosphoribosyl)-ATP (PR-ATP). Has a crucial role in the pathway because the rate of histidine biosynthesis seems to be controlled primarily by regulation of HisG enzymatic activity.</text>
</comment>
<comment type="catalytic activity">
    <reaction evidence="1">
        <text>1-(5-phospho-beta-D-ribosyl)-ATP + diphosphate = 5-phospho-alpha-D-ribose 1-diphosphate + ATP</text>
        <dbReference type="Rhea" id="RHEA:18473"/>
        <dbReference type="ChEBI" id="CHEBI:30616"/>
        <dbReference type="ChEBI" id="CHEBI:33019"/>
        <dbReference type="ChEBI" id="CHEBI:58017"/>
        <dbReference type="ChEBI" id="CHEBI:73183"/>
        <dbReference type="EC" id="2.4.2.17"/>
    </reaction>
</comment>
<comment type="cofactor">
    <cofactor evidence="1">
        <name>Mg(2+)</name>
        <dbReference type="ChEBI" id="CHEBI:18420"/>
    </cofactor>
</comment>
<comment type="activity regulation">
    <text evidence="1">Feedback inhibited by histidine.</text>
</comment>
<comment type="pathway">
    <text evidence="1">Amino-acid biosynthesis; L-histidine biosynthesis; L-histidine from 5-phospho-alpha-D-ribose 1-diphosphate: step 1/9.</text>
</comment>
<comment type="subcellular location">
    <subcellularLocation>
        <location evidence="1">Cytoplasm</location>
    </subcellularLocation>
</comment>
<comment type="similarity">
    <text evidence="1">Belongs to the ATP phosphoribosyltransferase family. Long subfamily.</text>
</comment>
<feature type="chain" id="PRO_1000004468" description="ATP phosphoribosyltransferase">
    <location>
        <begin position="1"/>
        <end position="299"/>
    </location>
</feature>
<evidence type="ECO:0000255" key="1">
    <source>
        <dbReference type="HAMAP-Rule" id="MF_00079"/>
    </source>
</evidence>
<dbReference type="EC" id="2.4.2.17" evidence="1"/>
<dbReference type="EMBL" id="AE016827">
    <property type="protein sequence ID" value="AAU38500.1"/>
    <property type="molecule type" value="Genomic_DNA"/>
</dbReference>
<dbReference type="RefSeq" id="WP_011201053.1">
    <property type="nucleotide sequence ID" value="NC_006300.1"/>
</dbReference>
<dbReference type="SMR" id="Q65RB0"/>
<dbReference type="STRING" id="221988.MS1893"/>
<dbReference type="KEGG" id="msu:MS1893"/>
<dbReference type="eggNOG" id="COG0040">
    <property type="taxonomic scope" value="Bacteria"/>
</dbReference>
<dbReference type="HOGENOM" id="CLU_038115_1_0_6"/>
<dbReference type="OrthoDB" id="9801867at2"/>
<dbReference type="UniPathway" id="UPA00031">
    <property type="reaction ID" value="UER00006"/>
</dbReference>
<dbReference type="Proteomes" id="UP000000607">
    <property type="component" value="Chromosome"/>
</dbReference>
<dbReference type="GO" id="GO:0005737">
    <property type="term" value="C:cytoplasm"/>
    <property type="evidence" value="ECO:0007669"/>
    <property type="project" value="UniProtKB-SubCell"/>
</dbReference>
<dbReference type="GO" id="GO:0005524">
    <property type="term" value="F:ATP binding"/>
    <property type="evidence" value="ECO:0007669"/>
    <property type="project" value="UniProtKB-KW"/>
</dbReference>
<dbReference type="GO" id="GO:0003879">
    <property type="term" value="F:ATP phosphoribosyltransferase activity"/>
    <property type="evidence" value="ECO:0007669"/>
    <property type="project" value="UniProtKB-UniRule"/>
</dbReference>
<dbReference type="GO" id="GO:0000287">
    <property type="term" value="F:magnesium ion binding"/>
    <property type="evidence" value="ECO:0007669"/>
    <property type="project" value="UniProtKB-UniRule"/>
</dbReference>
<dbReference type="GO" id="GO:0000105">
    <property type="term" value="P:L-histidine biosynthetic process"/>
    <property type="evidence" value="ECO:0007669"/>
    <property type="project" value="UniProtKB-UniRule"/>
</dbReference>
<dbReference type="CDD" id="cd13592">
    <property type="entry name" value="PBP2_HisGL2"/>
    <property type="match status" value="1"/>
</dbReference>
<dbReference type="FunFam" id="3.30.70.120:FF:000002">
    <property type="entry name" value="ATP phosphoribosyltransferase"/>
    <property type="match status" value="1"/>
</dbReference>
<dbReference type="FunFam" id="3.40.190.10:FF:000008">
    <property type="entry name" value="ATP phosphoribosyltransferase"/>
    <property type="match status" value="1"/>
</dbReference>
<dbReference type="Gene3D" id="3.30.70.120">
    <property type="match status" value="1"/>
</dbReference>
<dbReference type="Gene3D" id="3.40.190.10">
    <property type="entry name" value="Periplasmic binding protein-like II"/>
    <property type="match status" value="2"/>
</dbReference>
<dbReference type="HAMAP" id="MF_00079">
    <property type="entry name" value="HisG_Long"/>
    <property type="match status" value="1"/>
</dbReference>
<dbReference type="InterPro" id="IPR020621">
    <property type="entry name" value="ATP-PRT_HisG_long"/>
</dbReference>
<dbReference type="InterPro" id="IPR013820">
    <property type="entry name" value="ATP_PRibTrfase_cat"/>
</dbReference>
<dbReference type="InterPro" id="IPR018198">
    <property type="entry name" value="ATP_PRibTrfase_CS"/>
</dbReference>
<dbReference type="InterPro" id="IPR001348">
    <property type="entry name" value="ATP_PRibTrfase_HisG"/>
</dbReference>
<dbReference type="InterPro" id="IPR013115">
    <property type="entry name" value="HisG_C"/>
</dbReference>
<dbReference type="InterPro" id="IPR011322">
    <property type="entry name" value="N-reg_PII-like_a/b"/>
</dbReference>
<dbReference type="InterPro" id="IPR015867">
    <property type="entry name" value="N-reg_PII/ATP_PRibTrfase_C"/>
</dbReference>
<dbReference type="NCBIfam" id="TIGR00070">
    <property type="entry name" value="hisG"/>
    <property type="match status" value="1"/>
</dbReference>
<dbReference type="NCBIfam" id="TIGR03455">
    <property type="entry name" value="HisG_C-term"/>
    <property type="match status" value="1"/>
</dbReference>
<dbReference type="PANTHER" id="PTHR21403:SF8">
    <property type="entry name" value="ATP PHOSPHORIBOSYLTRANSFERASE"/>
    <property type="match status" value="1"/>
</dbReference>
<dbReference type="PANTHER" id="PTHR21403">
    <property type="entry name" value="ATP PHOSPHORIBOSYLTRANSFERASE ATP-PRTASE"/>
    <property type="match status" value="1"/>
</dbReference>
<dbReference type="Pfam" id="PF01634">
    <property type="entry name" value="HisG"/>
    <property type="match status" value="1"/>
</dbReference>
<dbReference type="Pfam" id="PF08029">
    <property type="entry name" value="HisG_C"/>
    <property type="match status" value="1"/>
</dbReference>
<dbReference type="SUPFAM" id="SSF54913">
    <property type="entry name" value="GlnB-like"/>
    <property type="match status" value="1"/>
</dbReference>
<dbReference type="SUPFAM" id="SSF53850">
    <property type="entry name" value="Periplasmic binding protein-like II"/>
    <property type="match status" value="1"/>
</dbReference>
<dbReference type="PROSITE" id="PS01316">
    <property type="entry name" value="ATP_P_PHORIBOSYLTR"/>
    <property type="match status" value="1"/>
</dbReference>